<dbReference type="EMBL" id="CH408156">
    <property type="protein sequence ID" value="EDK38144.2"/>
    <property type="molecule type" value="Genomic_DNA"/>
</dbReference>
<dbReference type="RefSeq" id="XP_001486571.1">
    <property type="nucleotide sequence ID" value="XM_001486521.1"/>
</dbReference>
<dbReference type="FunCoup" id="A5DG41">
    <property type="interactions" value="44"/>
</dbReference>
<dbReference type="STRING" id="294746.A5DG41"/>
<dbReference type="GeneID" id="5128500"/>
<dbReference type="KEGG" id="pgu:PGUG_02242"/>
<dbReference type="VEuPathDB" id="FungiDB:PGUG_02242"/>
<dbReference type="eggNOG" id="ENOG502QVXN">
    <property type="taxonomic scope" value="Eukaryota"/>
</dbReference>
<dbReference type="HOGENOM" id="CLU_028817_0_0_1"/>
<dbReference type="InParanoid" id="A5DG41"/>
<dbReference type="OMA" id="LRFKVWP"/>
<dbReference type="OrthoDB" id="27140at2759"/>
<dbReference type="Proteomes" id="UP000001997">
    <property type="component" value="Unassembled WGS sequence"/>
</dbReference>
<dbReference type="GO" id="GO:0005737">
    <property type="term" value="C:cytoplasm"/>
    <property type="evidence" value="ECO:0007669"/>
    <property type="project" value="UniProtKB-SubCell"/>
</dbReference>
<dbReference type="Gene3D" id="1.10.472.80">
    <property type="entry name" value="Ypt/Rab-GAP domain of gyp1p, domain 3"/>
    <property type="match status" value="1"/>
</dbReference>
<dbReference type="InterPro" id="IPR000195">
    <property type="entry name" value="Rab-GAP-TBC_dom"/>
</dbReference>
<dbReference type="InterPro" id="IPR035969">
    <property type="entry name" value="Rab-GAP_TBC_sf"/>
</dbReference>
<dbReference type="SMART" id="SM00164">
    <property type="entry name" value="TBC"/>
    <property type="match status" value="1"/>
</dbReference>
<dbReference type="SUPFAM" id="SSF47923">
    <property type="entry name" value="Ypt/Rab-GAP domain of gyp1p"/>
    <property type="match status" value="1"/>
</dbReference>
<dbReference type="PROSITE" id="PS50086">
    <property type="entry name" value="TBC_RABGAP"/>
    <property type="match status" value="1"/>
</dbReference>
<organism>
    <name type="scientific">Meyerozyma guilliermondii (strain ATCC 6260 / CBS 566 / DSM 6381 / JCM 1539 / NBRC 10279 / NRRL Y-324)</name>
    <name type="common">Yeast</name>
    <name type="synonym">Candida guilliermondii</name>
    <dbReference type="NCBI Taxonomy" id="294746"/>
    <lineage>
        <taxon>Eukaryota</taxon>
        <taxon>Fungi</taxon>
        <taxon>Dikarya</taxon>
        <taxon>Ascomycota</taxon>
        <taxon>Saccharomycotina</taxon>
        <taxon>Pichiomycetes</taxon>
        <taxon>Debaryomycetaceae</taxon>
        <taxon>Meyerozyma</taxon>
    </lineage>
</organism>
<accession>A5DG41</accession>
<keyword id="KW-0963">Cytoplasm</keyword>
<keyword id="KW-1185">Reference proteome</keyword>
<gene>
    <name type="primary">OCA5</name>
    <name type="ORF">PGUG_02242</name>
</gene>
<evidence type="ECO:0000250" key="1"/>
<evidence type="ECO:0000255" key="2">
    <source>
        <dbReference type="PROSITE-ProRule" id="PRU00163"/>
    </source>
</evidence>
<evidence type="ECO:0000256" key="3">
    <source>
        <dbReference type="SAM" id="MobiDB-lite"/>
    </source>
</evidence>
<evidence type="ECO:0000305" key="4"/>
<name>OCA5_PICGU</name>
<sequence length="561" mass="65269">MSEQSPRDPVAASENRKPSFRFDADIFKLCTRYLEENNYHGLALIARQKGLPPFLRLRIWPILLKHHPFVLNPFLQPDNDVLNKPKHDSDQDDRAEGQLNDEDIRFNIKKDLKKYVQRLKYNSSPDINEIEMEMLEVLEKAIFKFVKKWGKIIKYDQAITWIALGLAEWLPPIENTHWVLIGRDVSSSDNLYITNIMDEYSTYIENVPDLEDYLNDVIASPQMKFSDVFERLVLVLLHSPENRTRSPSSKVNKTTLPLNGGTIEDRVSFFIYCLRKLLPELSDYFQEEQILNKFGSNDDEWLIWWLKWCGSKVWSRMDRGRIWDMILGWRLQNPKKSTAYYQDKLKLTKHQLEKLGPDVFWSVSQHDEETVDERGEPDEFKKSDSFKDLLHGLSMANISASSSNTNSPSESTSPLLTPTRRSSSSSTSLSEGIDDMNIPFSRLDPHIELVFISLALLKSKEGTLVELDQHEIRQFLSRLPTKSYNYTTRYQKYKQMKMEKEKEEDNGNGSVSSEASNSDGGSQIITNDNANSRRYDFMDNVVNEAGELWRKWFWSEAVDNE</sequence>
<protein>
    <recommendedName>
        <fullName>Oxidant-induced cell-cycle arrest protein 5</fullName>
    </recommendedName>
</protein>
<feature type="chain" id="PRO_0000408215" description="Oxidant-induced cell-cycle arrest protein 5">
    <location>
        <begin position="1"/>
        <end position="561"/>
    </location>
</feature>
<feature type="domain" description="Rab-GAP TBC" evidence="2">
    <location>
        <begin position="50"/>
        <end position="330"/>
    </location>
</feature>
<feature type="region of interest" description="Disordered" evidence="3">
    <location>
        <begin position="399"/>
        <end position="434"/>
    </location>
</feature>
<feature type="region of interest" description="Disordered" evidence="3">
    <location>
        <begin position="498"/>
        <end position="529"/>
    </location>
</feature>
<feature type="compositionally biased region" description="Low complexity" evidence="3">
    <location>
        <begin position="399"/>
        <end position="430"/>
    </location>
</feature>
<feature type="compositionally biased region" description="Polar residues" evidence="3">
    <location>
        <begin position="507"/>
        <end position="529"/>
    </location>
</feature>
<proteinExistence type="inferred from homology"/>
<comment type="subcellular location">
    <subcellularLocation>
        <location evidence="1">Cytoplasm</location>
    </subcellularLocation>
</comment>
<comment type="similarity">
    <text evidence="4">Belongs to the OCA5 family.</text>
</comment>
<reference key="1">
    <citation type="journal article" date="2009" name="Nature">
        <title>Evolution of pathogenicity and sexual reproduction in eight Candida genomes.</title>
        <authorList>
            <person name="Butler G."/>
            <person name="Rasmussen M.D."/>
            <person name="Lin M.F."/>
            <person name="Santos M.A.S."/>
            <person name="Sakthikumar S."/>
            <person name="Munro C.A."/>
            <person name="Rheinbay E."/>
            <person name="Grabherr M."/>
            <person name="Forche A."/>
            <person name="Reedy J.L."/>
            <person name="Agrafioti I."/>
            <person name="Arnaud M.B."/>
            <person name="Bates S."/>
            <person name="Brown A.J.P."/>
            <person name="Brunke S."/>
            <person name="Costanzo M.C."/>
            <person name="Fitzpatrick D.A."/>
            <person name="de Groot P.W.J."/>
            <person name="Harris D."/>
            <person name="Hoyer L.L."/>
            <person name="Hube B."/>
            <person name="Klis F.M."/>
            <person name="Kodira C."/>
            <person name="Lennard N."/>
            <person name="Logue M.E."/>
            <person name="Martin R."/>
            <person name="Neiman A.M."/>
            <person name="Nikolaou E."/>
            <person name="Quail M.A."/>
            <person name="Quinn J."/>
            <person name="Santos M.C."/>
            <person name="Schmitzberger F.F."/>
            <person name="Sherlock G."/>
            <person name="Shah P."/>
            <person name="Silverstein K.A.T."/>
            <person name="Skrzypek M.S."/>
            <person name="Soll D."/>
            <person name="Staggs R."/>
            <person name="Stansfield I."/>
            <person name="Stumpf M.P.H."/>
            <person name="Sudbery P.E."/>
            <person name="Srikantha T."/>
            <person name="Zeng Q."/>
            <person name="Berman J."/>
            <person name="Berriman M."/>
            <person name="Heitman J."/>
            <person name="Gow N.A.R."/>
            <person name="Lorenz M.C."/>
            <person name="Birren B.W."/>
            <person name="Kellis M."/>
            <person name="Cuomo C.A."/>
        </authorList>
    </citation>
    <scope>NUCLEOTIDE SEQUENCE [LARGE SCALE GENOMIC DNA]</scope>
    <source>
        <strain>ATCC 6260 / CBS 566 / DSM 6381 / JCM 1539 / NBRC 10279 / NRRL Y-324</strain>
    </source>
</reference>